<sequence>MATPVEPPNGIRTPGKHYYSMWQSLFEIDTKYVPIKPIGRGAYGIVCSSVNRETNEKVAIKKINNAFENRIDALRTLRELKLLRHLRHENVIALKDVMMPIQRRSFKDVYLVYELMDTDLHQIIKSSQTLSNDHCQYFLFQLLRGLKYLHSANILHRDLKPGNLLINANCDLKICDFGLARTSSGKDQFMTEYVVTRWYRAPELLLCCDNYGTSIDVWSVGCIFADVLGRKPVFPGTECLNQLKLIINILGSQREEDIEFIDNPKARKYIKSLPYSPGTPFSRLYPNAHPLAIDLLQRMLVFDPSKRISVMEALQHPYMSPLYDPNTDPPAQVPINLDIDEDLVEETIREMMWEEILHYHPEAAVALLWKLFYELLLVPSRHRP</sequence>
<gene>
    <name type="primary">MPK1</name>
    <name type="synonym">MEK1</name>
</gene>
<proteinExistence type="evidence at transcript level"/>
<evidence type="ECO:0000250" key="1"/>
<evidence type="ECO:0000255" key="2">
    <source>
        <dbReference type="PROSITE-ProRule" id="PRU00159"/>
    </source>
</evidence>
<evidence type="ECO:0000255" key="3">
    <source>
        <dbReference type="PROSITE-ProRule" id="PRU10027"/>
    </source>
</evidence>
<evidence type="ECO:0000305" key="4"/>
<dbReference type="EC" id="2.7.11.24"/>
<dbReference type="EMBL" id="X83440">
    <property type="protein sequence ID" value="CAA58466.1"/>
    <property type="molecule type" value="mRNA"/>
</dbReference>
<dbReference type="PIR" id="S52989">
    <property type="entry name" value="S52989"/>
</dbReference>
<dbReference type="SMR" id="Q40884"/>
<dbReference type="BRENDA" id="2.7.11.24">
    <property type="organism ID" value="4700"/>
</dbReference>
<dbReference type="GO" id="GO:0005524">
    <property type="term" value="F:ATP binding"/>
    <property type="evidence" value="ECO:0007669"/>
    <property type="project" value="UniProtKB-KW"/>
</dbReference>
<dbReference type="GO" id="GO:0004707">
    <property type="term" value="F:MAP kinase activity"/>
    <property type="evidence" value="ECO:0007669"/>
    <property type="project" value="UniProtKB-EC"/>
</dbReference>
<dbReference type="GO" id="GO:0106310">
    <property type="term" value="F:protein serine kinase activity"/>
    <property type="evidence" value="ECO:0007669"/>
    <property type="project" value="RHEA"/>
</dbReference>
<dbReference type="CDD" id="cd07858">
    <property type="entry name" value="STKc_TEY_MAPK"/>
    <property type="match status" value="1"/>
</dbReference>
<dbReference type="FunFam" id="1.10.510.10:FF:000206">
    <property type="entry name" value="Mitogen-activated protein kinase"/>
    <property type="match status" value="1"/>
</dbReference>
<dbReference type="FunFam" id="3.30.200.20:FF:000046">
    <property type="entry name" value="Mitogen-activated protein kinase"/>
    <property type="match status" value="1"/>
</dbReference>
<dbReference type="Gene3D" id="3.30.200.20">
    <property type="entry name" value="Phosphorylase Kinase, domain 1"/>
    <property type="match status" value="1"/>
</dbReference>
<dbReference type="Gene3D" id="1.10.510.10">
    <property type="entry name" value="Transferase(Phosphotransferase) domain 1"/>
    <property type="match status" value="1"/>
</dbReference>
<dbReference type="InterPro" id="IPR011009">
    <property type="entry name" value="Kinase-like_dom_sf"/>
</dbReference>
<dbReference type="InterPro" id="IPR050117">
    <property type="entry name" value="MAP_kinase"/>
</dbReference>
<dbReference type="InterPro" id="IPR003527">
    <property type="entry name" value="MAP_kinase_CS"/>
</dbReference>
<dbReference type="InterPro" id="IPR000719">
    <property type="entry name" value="Prot_kinase_dom"/>
</dbReference>
<dbReference type="InterPro" id="IPR017441">
    <property type="entry name" value="Protein_kinase_ATP_BS"/>
</dbReference>
<dbReference type="InterPro" id="IPR008271">
    <property type="entry name" value="Ser/Thr_kinase_AS"/>
</dbReference>
<dbReference type="PANTHER" id="PTHR24055">
    <property type="entry name" value="MITOGEN-ACTIVATED PROTEIN KINASE"/>
    <property type="match status" value="1"/>
</dbReference>
<dbReference type="Pfam" id="PF00069">
    <property type="entry name" value="Pkinase"/>
    <property type="match status" value="1"/>
</dbReference>
<dbReference type="SMART" id="SM00220">
    <property type="entry name" value="S_TKc"/>
    <property type="match status" value="1"/>
</dbReference>
<dbReference type="SUPFAM" id="SSF56112">
    <property type="entry name" value="Protein kinase-like (PK-like)"/>
    <property type="match status" value="1"/>
</dbReference>
<dbReference type="PROSITE" id="PS01351">
    <property type="entry name" value="MAPK"/>
    <property type="match status" value="1"/>
</dbReference>
<dbReference type="PROSITE" id="PS00107">
    <property type="entry name" value="PROTEIN_KINASE_ATP"/>
    <property type="match status" value="1"/>
</dbReference>
<dbReference type="PROSITE" id="PS50011">
    <property type="entry name" value="PROTEIN_KINASE_DOM"/>
    <property type="match status" value="1"/>
</dbReference>
<dbReference type="PROSITE" id="PS00108">
    <property type="entry name" value="PROTEIN_KINASE_ST"/>
    <property type="match status" value="1"/>
</dbReference>
<comment type="catalytic activity">
    <reaction>
        <text>L-seryl-[protein] + ATP = O-phospho-L-seryl-[protein] + ADP + H(+)</text>
        <dbReference type="Rhea" id="RHEA:17989"/>
        <dbReference type="Rhea" id="RHEA-COMP:9863"/>
        <dbReference type="Rhea" id="RHEA-COMP:11604"/>
        <dbReference type="ChEBI" id="CHEBI:15378"/>
        <dbReference type="ChEBI" id="CHEBI:29999"/>
        <dbReference type="ChEBI" id="CHEBI:30616"/>
        <dbReference type="ChEBI" id="CHEBI:83421"/>
        <dbReference type="ChEBI" id="CHEBI:456216"/>
        <dbReference type="EC" id="2.7.11.24"/>
    </reaction>
</comment>
<comment type="catalytic activity">
    <reaction>
        <text>L-threonyl-[protein] + ATP = O-phospho-L-threonyl-[protein] + ADP + H(+)</text>
        <dbReference type="Rhea" id="RHEA:46608"/>
        <dbReference type="Rhea" id="RHEA-COMP:11060"/>
        <dbReference type="Rhea" id="RHEA-COMP:11605"/>
        <dbReference type="ChEBI" id="CHEBI:15378"/>
        <dbReference type="ChEBI" id="CHEBI:30013"/>
        <dbReference type="ChEBI" id="CHEBI:30616"/>
        <dbReference type="ChEBI" id="CHEBI:61977"/>
        <dbReference type="ChEBI" id="CHEBI:456216"/>
        <dbReference type="EC" id="2.7.11.24"/>
    </reaction>
</comment>
<comment type="cofactor">
    <cofactor evidence="1">
        <name>Mg(2+)</name>
        <dbReference type="ChEBI" id="CHEBI:18420"/>
    </cofactor>
</comment>
<comment type="activity regulation">
    <text evidence="1">Activated by tyrosine and threonine phosphorylation.</text>
</comment>
<comment type="tissue specificity">
    <text>Expressed in vegetative organs such as leaf, root, or stem. In the reproductive organs, it is found in the ovary, but not in the stamen.</text>
</comment>
<comment type="developmental stage">
    <text>Present during flower development prior to fertilization. At early stages of ovule development, the expression is uniform throughout the ovule. At a later stage, is localized adjacent to the embryo sac. When the flower opens and pollen is released, it is found in the whole ovule and in the outer layer of the placenta.</text>
</comment>
<comment type="domain">
    <text>The TXY motif contains the threonine and tyrosine residues whose phosphorylation activates the MAP kinases.</text>
</comment>
<comment type="PTM">
    <text evidence="1">Dually phosphorylated on Thr-191 and Tyr-193, which activates the enzyme.</text>
</comment>
<comment type="similarity">
    <text evidence="4">Belongs to the protein kinase superfamily. CMGC Ser/Thr protein kinase family. MAP kinase subfamily.</text>
</comment>
<keyword id="KW-0067">ATP-binding</keyword>
<keyword id="KW-0418">Kinase</keyword>
<keyword id="KW-0547">Nucleotide-binding</keyword>
<keyword id="KW-0597">Phosphoprotein</keyword>
<keyword id="KW-0723">Serine/threonine-protein kinase</keyword>
<keyword id="KW-0808">Transferase</keyword>
<protein>
    <recommendedName>
        <fullName>Mitogen-activated protein kinase homolog 1</fullName>
        <ecNumber>2.7.11.24</ecNumber>
    </recommendedName>
    <alternativeName>
        <fullName>PMEK1</fullName>
    </alternativeName>
</protein>
<feature type="chain" id="PRO_0000186320" description="Mitogen-activated protein kinase homolog 1">
    <location>
        <begin position="1"/>
        <end position="384"/>
    </location>
</feature>
<feature type="domain" description="Protein kinase" evidence="2">
    <location>
        <begin position="32"/>
        <end position="319"/>
    </location>
</feature>
<feature type="short sequence motif" description="TXY">
    <location>
        <begin position="191"/>
        <end position="193"/>
    </location>
</feature>
<feature type="active site" description="Proton acceptor" evidence="2 3">
    <location>
        <position position="158"/>
    </location>
</feature>
<feature type="binding site" evidence="2">
    <location>
        <begin position="38"/>
        <end position="46"/>
    </location>
    <ligand>
        <name>ATP</name>
        <dbReference type="ChEBI" id="CHEBI:30616"/>
    </ligand>
</feature>
<feature type="binding site" evidence="2">
    <location>
        <position position="61"/>
    </location>
    <ligand>
        <name>ATP</name>
        <dbReference type="ChEBI" id="CHEBI:30616"/>
    </ligand>
</feature>
<feature type="modified residue" description="Phosphothreonine" evidence="1">
    <location>
        <position position="191"/>
    </location>
</feature>
<feature type="modified residue" description="Phosphotyrosine" evidence="1">
    <location>
        <position position="193"/>
    </location>
</feature>
<organism>
    <name type="scientific">Petunia hybrida</name>
    <name type="common">Petunia</name>
    <dbReference type="NCBI Taxonomy" id="4102"/>
    <lineage>
        <taxon>Eukaryota</taxon>
        <taxon>Viridiplantae</taxon>
        <taxon>Streptophyta</taxon>
        <taxon>Embryophyta</taxon>
        <taxon>Tracheophyta</taxon>
        <taxon>Spermatophyta</taxon>
        <taxon>Magnoliopsida</taxon>
        <taxon>eudicotyledons</taxon>
        <taxon>Gunneridae</taxon>
        <taxon>Pentapetalae</taxon>
        <taxon>asterids</taxon>
        <taxon>lamiids</taxon>
        <taxon>Solanales</taxon>
        <taxon>Solanaceae</taxon>
        <taxon>Petunioideae</taxon>
        <taxon>Petunia</taxon>
    </lineage>
</organism>
<reference key="1">
    <citation type="journal article" date="1995" name="Plant Mol. Biol.">
        <title>A homologue of the MAP/ERK family of protein kinase genes is expressed in vegetative and in female reproductive organs of Petunia hybrida.</title>
        <authorList>
            <person name="Decroocq-Ferrant V."/>
            <person name="Decroocq S."/>
            <person name="van Went J."/>
            <person name="Schmidt E."/>
            <person name="Kreis M."/>
        </authorList>
    </citation>
    <scope>NUCLEOTIDE SEQUENCE [MRNA]</scope>
    <source>
        <tissue>Ovule</tissue>
    </source>
</reference>
<name>MPK_PETHY</name>
<accession>Q40884</accession>